<name>PANB_PSYWF</name>
<feature type="chain" id="PRO_1000071531" description="3-methyl-2-oxobutanoate hydroxymethyltransferase">
    <location>
        <begin position="1"/>
        <end position="270"/>
    </location>
</feature>
<feature type="active site" description="Proton acceptor" evidence="1">
    <location>
        <position position="179"/>
    </location>
</feature>
<feature type="binding site" evidence="1">
    <location>
        <begin position="43"/>
        <end position="44"/>
    </location>
    <ligand>
        <name>3-methyl-2-oxobutanoate</name>
        <dbReference type="ChEBI" id="CHEBI:11851"/>
    </ligand>
</feature>
<feature type="binding site" evidence="1">
    <location>
        <position position="43"/>
    </location>
    <ligand>
        <name>Mg(2+)</name>
        <dbReference type="ChEBI" id="CHEBI:18420"/>
    </ligand>
</feature>
<feature type="binding site" evidence="1">
    <location>
        <position position="82"/>
    </location>
    <ligand>
        <name>3-methyl-2-oxobutanoate</name>
        <dbReference type="ChEBI" id="CHEBI:11851"/>
    </ligand>
</feature>
<feature type="binding site" evidence="1">
    <location>
        <position position="82"/>
    </location>
    <ligand>
        <name>Mg(2+)</name>
        <dbReference type="ChEBI" id="CHEBI:18420"/>
    </ligand>
</feature>
<feature type="binding site" evidence="1">
    <location>
        <position position="110"/>
    </location>
    <ligand>
        <name>3-methyl-2-oxobutanoate</name>
        <dbReference type="ChEBI" id="CHEBI:11851"/>
    </ligand>
</feature>
<feature type="binding site" evidence="1">
    <location>
        <position position="112"/>
    </location>
    <ligand>
        <name>Mg(2+)</name>
        <dbReference type="ChEBI" id="CHEBI:18420"/>
    </ligand>
</feature>
<sequence length="270" mass="28750">MITLSTLKKYKKEGRKFSCLTCYDAMFAKMMQNAQVDTILIGDSLGMVVQGNDSTLPVTVEDIVYHTGNVSRSNKHALILADLPFMSYVTVEDAIANTRKVMQAGAQVIKLEGGAELSEMVTTLTKAGAPICVHLGLTPQSVNVFGGYKVQGKSDDAAAKLMSDVHAVVAAGASLILLECVPASLAKAVTEAVDVPVIGIGAGADTDGQVLVMHDMLGVTHGRTARFVHDFLTDERNQKSEYAGSVEGAFALFHNSVIEGSYPQAEHQFN</sequence>
<evidence type="ECO:0000255" key="1">
    <source>
        <dbReference type="HAMAP-Rule" id="MF_00156"/>
    </source>
</evidence>
<protein>
    <recommendedName>
        <fullName evidence="1">3-methyl-2-oxobutanoate hydroxymethyltransferase</fullName>
        <ecNumber evidence="1">2.1.2.11</ecNumber>
    </recommendedName>
    <alternativeName>
        <fullName evidence="1">Ketopantoate hydroxymethyltransferase</fullName>
        <shortName evidence="1">KPHMT</shortName>
    </alternativeName>
</protein>
<organism>
    <name type="scientific">Psychrobacter sp. (strain PRwf-1)</name>
    <dbReference type="NCBI Taxonomy" id="349106"/>
    <lineage>
        <taxon>Bacteria</taxon>
        <taxon>Pseudomonadati</taxon>
        <taxon>Pseudomonadota</taxon>
        <taxon>Gammaproteobacteria</taxon>
        <taxon>Moraxellales</taxon>
        <taxon>Moraxellaceae</taxon>
        <taxon>Psychrobacter</taxon>
    </lineage>
</organism>
<gene>
    <name evidence="1" type="primary">panB</name>
    <name type="ordered locus">PsycPRwf_2131</name>
</gene>
<dbReference type="EC" id="2.1.2.11" evidence="1"/>
<dbReference type="EMBL" id="CP000713">
    <property type="protein sequence ID" value="ABQ95071.1"/>
    <property type="molecule type" value="Genomic_DNA"/>
</dbReference>
<dbReference type="SMR" id="A5WHD0"/>
<dbReference type="STRING" id="349106.PsycPRwf_2131"/>
<dbReference type="KEGG" id="prw:PsycPRwf_2131"/>
<dbReference type="eggNOG" id="COG0413">
    <property type="taxonomic scope" value="Bacteria"/>
</dbReference>
<dbReference type="HOGENOM" id="CLU_036645_1_0_6"/>
<dbReference type="UniPathway" id="UPA00028">
    <property type="reaction ID" value="UER00003"/>
</dbReference>
<dbReference type="GO" id="GO:0005737">
    <property type="term" value="C:cytoplasm"/>
    <property type="evidence" value="ECO:0007669"/>
    <property type="project" value="UniProtKB-SubCell"/>
</dbReference>
<dbReference type="GO" id="GO:0003864">
    <property type="term" value="F:3-methyl-2-oxobutanoate hydroxymethyltransferase activity"/>
    <property type="evidence" value="ECO:0007669"/>
    <property type="project" value="UniProtKB-UniRule"/>
</dbReference>
<dbReference type="GO" id="GO:0000287">
    <property type="term" value="F:magnesium ion binding"/>
    <property type="evidence" value="ECO:0007669"/>
    <property type="project" value="TreeGrafter"/>
</dbReference>
<dbReference type="GO" id="GO:0015940">
    <property type="term" value="P:pantothenate biosynthetic process"/>
    <property type="evidence" value="ECO:0007669"/>
    <property type="project" value="UniProtKB-UniRule"/>
</dbReference>
<dbReference type="CDD" id="cd06557">
    <property type="entry name" value="KPHMT-like"/>
    <property type="match status" value="1"/>
</dbReference>
<dbReference type="FunFam" id="3.20.20.60:FF:000003">
    <property type="entry name" value="3-methyl-2-oxobutanoate hydroxymethyltransferase"/>
    <property type="match status" value="1"/>
</dbReference>
<dbReference type="Gene3D" id="3.20.20.60">
    <property type="entry name" value="Phosphoenolpyruvate-binding domains"/>
    <property type="match status" value="1"/>
</dbReference>
<dbReference type="HAMAP" id="MF_00156">
    <property type="entry name" value="PanB"/>
    <property type="match status" value="1"/>
</dbReference>
<dbReference type="InterPro" id="IPR003700">
    <property type="entry name" value="Pantoate_hydroxy_MeTrfase"/>
</dbReference>
<dbReference type="InterPro" id="IPR015813">
    <property type="entry name" value="Pyrv/PenolPyrv_kinase-like_dom"/>
</dbReference>
<dbReference type="InterPro" id="IPR040442">
    <property type="entry name" value="Pyrv_kinase-like_dom_sf"/>
</dbReference>
<dbReference type="NCBIfam" id="TIGR00222">
    <property type="entry name" value="panB"/>
    <property type="match status" value="1"/>
</dbReference>
<dbReference type="NCBIfam" id="NF001452">
    <property type="entry name" value="PRK00311.1"/>
    <property type="match status" value="1"/>
</dbReference>
<dbReference type="PANTHER" id="PTHR20881">
    <property type="entry name" value="3-METHYL-2-OXOBUTANOATE HYDROXYMETHYLTRANSFERASE"/>
    <property type="match status" value="1"/>
</dbReference>
<dbReference type="PANTHER" id="PTHR20881:SF0">
    <property type="entry name" value="3-METHYL-2-OXOBUTANOATE HYDROXYMETHYLTRANSFERASE"/>
    <property type="match status" value="1"/>
</dbReference>
<dbReference type="Pfam" id="PF02548">
    <property type="entry name" value="Pantoate_transf"/>
    <property type="match status" value="1"/>
</dbReference>
<dbReference type="PIRSF" id="PIRSF000388">
    <property type="entry name" value="Pantoate_hydroxy_MeTrfase"/>
    <property type="match status" value="1"/>
</dbReference>
<dbReference type="SUPFAM" id="SSF51621">
    <property type="entry name" value="Phosphoenolpyruvate/pyruvate domain"/>
    <property type="match status" value="1"/>
</dbReference>
<reference key="1">
    <citation type="submission" date="2007-05" db="EMBL/GenBank/DDBJ databases">
        <title>Complete sequence of chromosome of Psychrobacter sp. PRwf-1.</title>
        <authorList>
            <consortium name="US DOE Joint Genome Institute"/>
            <person name="Copeland A."/>
            <person name="Lucas S."/>
            <person name="Lapidus A."/>
            <person name="Barry K."/>
            <person name="Detter J.C."/>
            <person name="Glavina del Rio T."/>
            <person name="Hammon N."/>
            <person name="Israni S."/>
            <person name="Dalin E."/>
            <person name="Tice H."/>
            <person name="Pitluck S."/>
            <person name="Chain P."/>
            <person name="Malfatti S."/>
            <person name="Shin M."/>
            <person name="Vergez L."/>
            <person name="Schmutz J."/>
            <person name="Larimer F."/>
            <person name="Land M."/>
            <person name="Hauser L."/>
            <person name="Kyrpides N."/>
            <person name="Kim E."/>
            <person name="Tiedje J."/>
            <person name="Richardson P."/>
        </authorList>
    </citation>
    <scope>NUCLEOTIDE SEQUENCE [LARGE SCALE GENOMIC DNA]</scope>
    <source>
        <strain>PRwf-1</strain>
    </source>
</reference>
<keyword id="KW-0963">Cytoplasm</keyword>
<keyword id="KW-0460">Magnesium</keyword>
<keyword id="KW-0479">Metal-binding</keyword>
<keyword id="KW-0566">Pantothenate biosynthesis</keyword>
<keyword id="KW-0808">Transferase</keyword>
<accession>A5WHD0</accession>
<comment type="function">
    <text evidence="1">Catalyzes the reversible reaction in which hydroxymethyl group from 5,10-methylenetetrahydrofolate is transferred onto alpha-ketoisovalerate to form ketopantoate.</text>
</comment>
<comment type="catalytic activity">
    <reaction evidence="1">
        <text>3-methyl-2-oxobutanoate + (6R)-5,10-methylene-5,6,7,8-tetrahydrofolate + H2O = 2-dehydropantoate + (6S)-5,6,7,8-tetrahydrofolate</text>
        <dbReference type="Rhea" id="RHEA:11824"/>
        <dbReference type="ChEBI" id="CHEBI:11561"/>
        <dbReference type="ChEBI" id="CHEBI:11851"/>
        <dbReference type="ChEBI" id="CHEBI:15377"/>
        <dbReference type="ChEBI" id="CHEBI:15636"/>
        <dbReference type="ChEBI" id="CHEBI:57453"/>
        <dbReference type="EC" id="2.1.2.11"/>
    </reaction>
</comment>
<comment type="cofactor">
    <cofactor evidence="1">
        <name>Mg(2+)</name>
        <dbReference type="ChEBI" id="CHEBI:18420"/>
    </cofactor>
    <text evidence="1">Binds 1 Mg(2+) ion per subunit.</text>
</comment>
<comment type="pathway">
    <text evidence="1">Cofactor biosynthesis; (R)-pantothenate biosynthesis; (R)-pantoate from 3-methyl-2-oxobutanoate: step 1/2.</text>
</comment>
<comment type="subunit">
    <text evidence="1">Homodecamer; pentamer of dimers.</text>
</comment>
<comment type="subcellular location">
    <subcellularLocation>
        <location evidence="1">Cytoplasm</location>
    </subcellularLocation>
</comment>
<comment type="similarity">
    <text evidence="1">Belongs to the PanB family.</text>
</comment>
<proteinExistence type="inferred from homology"/>